<feature type="chain" id="PRO_0000047922" description="DNA-directed RNA polymerase subunit beta">
    <location>
        <begin position="1"/>
        <end position="1391"/>
    </location>
</feature>
<keyword id="KW-0240">DNA-directed RNA polymerase</keyword>
<keyword id="KW-0548">Nucleotidyltransferase</keyword>
<keyword id="KW-1185">Reference proteome</keyword>
<keyword id="KW-0804">Transcription</keyword>
<keyword id="KW-0808">Transferase</keyword>
<reference key="1">
    <citation type="journal article" date="1996" name="Nucleic Acids Res.">
        <title>Complete sequence analysis of the genome of the bacterium Mycoplasma pneumoniae.</title>
        <authorList>
            <person name="Himmelreich R."/>
            <person name="Hilbert H."/>
            <person name="Plagens H."/>
            <person name="Pirkl E."/>
            <person name="Li B.-C."/>
            <person name="Herrmann R."/>
        </authorList>
    </citation>
    <scope>NUCLEOTIDE SEQUENCE [LARGE SCALE GENOMIC DNA]</scope>
    <source>
        <strain>ATCC 29342 / M129 / Subtype 1</strain>
    </source>
</reference>
<organism>
    <name type="scientific">Mycoplasma pneumoniae (strain ATCC 29342 / M129 / Subtype 1)</name>
    <name type="common">Mycoplasmoides pneumoniae</name>
    <dbReference type="NCBI Taxonomy" id="272634"/>
    <lineage>
        <taxon>Bacteria</taxon>
        <taxon>Bacillati</taxon>
        <taxon>Mycoplasmatota</taxon>
        <taxon>Mycoplasmoidales</taxon>
        <taxon>Mycoplasmoidaceae</taxon>
        <taxon>Mycoplasmoides</taxon>
    </lineage>
</organism>
<sequence>MSQKPSFFQKKYSPTATRRYYGKIATDFVQPNLADIQIRSYQTFLDHDLENLIAAYFPIKSPNDRYTINFKGLRRTAPERNEAQSRSESKTYEIGIYADLELIDSATGTIKKPRKSKKNSATSSVDGVFLTNLPLITRDGVFIVNGIEKFVIAQITRSPGIYMLTKSQLKLSSSRKRVQEGYVCEVLPANGSVMLIYISNKKKIEDAFVQILLRDAVREGAKIFPITTLLKAFGMSGKEILKVFKNNEFITRSLEAEVYNAKDFLNNVDPEIKNLLREFRDGKTDLRRKGIASDQKIRSLVSDYVLLEKEHKALSEAKPNDPKVGQLEADMDELMDKIITERAAKHIVHELSISLRGLENTDECPENSYHALLCSRFFRQRRYNLSAAGRYKVSRKLRITERIYQKTLACDLHLKNGELLLKKGTLLVKEEIDKIKQAAQNNQIDFVQKIKLTTDGSAVNLSPESLLYESLDVYVNNDNFDVSVPVVGIHNDNDLNKAITLSDFIASISYVINIPSAIGKYDDIDHLGNKRVKLINELISSRLESGITRMERFLKEKLTIADGVNRGQQINEEGQVIEQAEKKELTIKSLINSKPIQIVIRDFFNTHQLTQFLDHQNPLSELSNKRRISAMGPGGISREDPNLDIRDVHYSQYGRICPIETPEGMNIGLIMSLASFAKIDENGFLMAPYRKIKNGVITDEVEYLTALREDEHIIAEISSLVNIDENNKILDKEIIGRYRSMQGLYDPSKIDYIDVAPHQVVSIGSSLIPFLENDDSARALMGTNMQRQAYPLIKPYAPVVGTGQEYKIARDSGLTMLAPCSGTVKYVDNSKITIESDSGEQHTLDLIKFERSNQNTCYNHVPLVEKGQRVTKDEVIADGPAVNKSELSLGQNVLVAFTTWNGYNYEDAIVISERLVKDDVLTSLTINEYVAQCLSTKNGDEQITRDIPNVSDANKRYLDENGIIMVGAEVKEGDVLVGKVSPKGQVEVSPEEKLFKAIFPESVQNVRDSSLKLPHGGDGIVSCVKRFSIANGNELNDGVIEMIKVYVVQKRKIQIGDKLAGRHGNKGVISKVVPVADMPHLEDGTPVDILLNPLGVPSRMNIGQIFEMHLGYAAHNLAKRMLISACFDDKKAQALSTEINQPQYKLDRLITGLKAQITNRGLKDEQAALAQLNNGDIALVLKEIGMSFDDLHFKVATPIFQGVNFQDLQDIMDEAGLKPAETHGKFKLIDGRTGLPFEKPISLGIMYIMKLNHMVDDKIHARAVGPYSKITQQPLGGKSQNGGQRFGEMEVWALEAYGAAYNLQELLTIKSDDVQGRNKAYAAIVKGAAFPEPGIPESFKLLTKELQGLALSVSFIYDDNTQQDSNNVSILQADGEQDDLFNDFEFDTEGY</sequence>
<evidence type="ECO:0000255" key="1">
    <source>
        <dbReference type="HAMAP-Rule" id="MF_01321"/>
    </source>
</evidence>
<proteinExistence type="inferred from homology"/>
<protein>
    <recommendedName>
        <fullName evidence="1">DNA-directed RNA polymerase subunit beta</fullName>
        <shortName evidence="1">RNAP subunit beta</shortName>
        <ecNumber evidence="1">2.7.7.6</ecNumber>
    </recommendedName>
    <alternativeName>
        <fullName evidence="1">RNA polymerase subunit beta</fullName>
    </alternativeName>
    <alternativeName>
        <fullName evidence="1">Transcriptase subunit beta</fullName>
    </alternativeName>
</protein>
<gene>
    <name evidence="1" type="primary">rpoB</name>
    <name type="ordered locus">MPN_516</name>
    <name type="ORF">MP326</name>
</gene>
<accession>P78013</accession>
<dbReference type="EC" id="2.7.7.6" evidence="1"/>
<dbReference type="EMBL" id="U00089">
    <property type="protein sequence ID" value="AAB95974.1"/>
    <property type="molecule type" value="Genomic_DNA"/>
</dbReference>
<dbReference type="PIR" id="S73652">
    <property type="entry name" value="S73652"/>
</dbReference>
<dbReference type="RefSeq" id="NP_110204.1">
    <property type="nucleotide sequence ID" value="NC_000912.1"/>
</dbReference>
<dbReference type="RefSeq" id="WP_010874872.1">
    <property type="nucleotide sequence ID" value="NZ_OU342337.1"/>
</dbReference>
<dbReference type="SMR" id="P78013"/>
<dbReference type="IntAct" id="P78013">
    <property type="interactions" value="14"/>
</dbReference>
<dbReference type="STRING" id="272634.MPN_516"/>
<dbReference type="EnsemblBacteria" id="AAB95974">
    <property type="protein sequence ID" value="AAB95974"/>
    <property type="gene ID" value="MPN_516"/>
</dbReference>
<dbReference type="KEGG" id="mpn:MPN_516"/>
<dbReference type="PATRIC" id="fig|272634.6.peg.570"/>
<dbReference type="HOGENOM" id="CLU_000524_4_1_14"/>
<dbReference type="OrthoDB" id="9803954at2"/>
<dbReference type="BioCyc" id="MPNE272634:G1GJ3-846-MONOMER"/>
<dbReference type="Proteomes" id="UP000000808">
    <property type="component" value="Chromosome"/>
</dbReference>
<dbReference type="GO" id="GO:0000428">
    <property type="term" value="C:DNA-directed RNA polymerase complex"/>
    <property type="evidence" value="ECO:0007669"/>
    <property type="project" value="UniProtKB-KW"/>
</dbReference>
<dbReference type="GO" id="GO:0003677">
    <property type="term" value="F:DNA binding"/>
    <property type="evidence" value="ECO:0007669"/>
    <property type="project" value="UniProtKB-UniRule"/>
</dbReference>
<dbReference type="GO" id="GO:0003899">
    <property type="term" value="F:DNA-directed RNA polymerase activity"/>
    <property type="evidence" value="ECO:0007669"/>
    <property type="project" value="UniProtKB-UniRule"/>
</dbReference>
<dbReference type="GO" id="GO:0032549">
    <property type="term" value="F:ribonucleoside binding"/>
    <property type="evidence" value="ECO:0007669"/>
    <property type="project" value="InterPro"/>
</dbReference>
<dbReference type="GO" id="GO:0006351">
    <property type="term" value="P:DNA-templated transcription"/>
    <property type="evidence" value="ECO:0007669"/>
    <property type="project" value="UniProtKB-UniRule"/>
</dbReference>
<dbReference type="CDD" id="cd00653">
    <property type="entry name" value="RNA_pol_B_RPB2"/>
    <property type="match status" value="1"/>
</dbReference>
<dbReference type="Gene3D" id="2.40.50.100">
    <property type="match status" value="1"/>
</dbReference>
<dbReference type="Gene3D" id="2.40.50.150">
    <property type="match status" value="1"/>
</dbReference>
<dbReference type="Gene3D" id="3.90.1100.10">
    <property type="match status" value="2"/>
</dbReference>
<dbReference type="Gene3D" id="2.30.150.10">
    <property type="entry name" value="DNA-directed RNA polymerase, beta subunit, external 1 domain"/>
    <property type="match status" value="1"/>
</dbReference>
<dbReference type="Gene3D" id="2.40.270.10">
    <property type="entry name" value="DNA-directed RNA polymerase, subunit 2, domain 6"/>
    <property type="match status" value="2"/>
</dbReference>
<dbReference type="Gene3D" id="3.90.1800.10">
    <property type="entry name" value="RNA polymerase alpha subunit dimerisation domain"/>
    <property type="match status" value="1"/>
</dbReference>
<dbReference type="Gene3D" id="3.90.1110.10">
    <property type="entry name" value="RNA polymerase Rpb2, domain 2"/>
    <property type="match status" value="1"/>
</dbReference>
<dbReference type="HAMAP" id="MF_01321">
    <property type="entry name" value="RNApol_bact_RpoB"/>
    <property type="match status" value="1"/>
</dbReference>
<dbReference type="InterPro" id="IPR042107">
    <property type="entry name" value="DNA-dir_RNA_pol_bsu_ext_1_sf"/>
</dbReference>
<dbReference type="InterPro" id="IPR019462">
    <property type="entry name" value="DNA-dir_RNA_pol_bsu_external_1"/>
</dbReference>
<dbReference type="InterPro" id="IPR015712">
    <property type="entry name" value="DNA-dir_RNA_pol_su2"/>
</dbReference>
<dbReference type="InterPro" id="IPR007120">
    <property type="entry name" value="DNA-dir_RNAP_su2_dom"/>
</dbReference>
<dbReference type="InterPro" id="IPR037033">
    <property type="entry name" value="DNA-dir_RNAP_su2_hyb_sf"/>
</dbReference>
<dbReference type="InterPro" id="IPR010243">
    <property type="entry name" value="RNA_pol_bsu_bac"/>
</dbReference>
<dbReference type="InterPro" id="IPR007121">
    <property type="entry name" value="RNA_pol_bsu_CS"/>
</dbReference>
<dbReference type="InterPro" id="IPR007644">
    <property type="entry name" value="RNA_pol_bsu_protrusion"/>
</dbReference>
<dbReference type="InterPro" id="IPR037034">
    <property type="entry name" value="RNA_pol_Rpb2_2_sf"/>
</dbReference>
<dbReference type="InterPro" id="IPR007645">
    <property type="entry name" value="RNA_pol_Rpb2_3"/>
</dbReference>
<dbReference type="InterPro" id="IPR007641">
    <property type="entry name" value="RNA_pol_Rpb2_7"/>
</dbReference>
<dbReference type="InterPro" id="IPR014724">
    <property type="entry name" value="RNA_pol_RPB2_OB-fold"/>
</dbReference>
<dbReference type="NCBIfam" id="NF001616">
    <property type="entry name" value="PRK00405.1"/>
    <property type="match status" value="1"/>
</dbReference>
<dbReference type="NCBIfam" id="TIGR02013">
    <property type="entry name" value="rpoB"/>
    <property type="match status" value="1"/>
</dbReference>
<dbReference type="PANTHER" id="PTHR20856">
    <property type="entry name" value="DNA-DIRECTED RNA POLYMERASE I SUBUNIT 2"/>
    <property type="match status" value="1"/>
</dbReference>
<dbReference type="Pfam" id="PF04563">
    <property type="entry name" value="RNA_pol_Rpb2_1"/>
    <property type="match status" value="1"/>
</dbReference>
<dbReference type="Pfam" id="PF04565">
    <property type="entry name" value="RNA_pol_Rpb2_3"/>
    <property type="match status" value="1"/>
</dbReference>
<dbReference type="Pfam" id="PF10385">
    <property type="entry name" value="RNA_pol_Rpb2_45"/>
    <property type="match status" value="1"/>
</dbReference>
<dbReference type="Pfam" id="PF00562">
    <property type="entry name" value="RNA_pol_Rpb2_6"/>
    <property type="match status" value="1"/>
</dbReference>
<dbReference type="Pfam" id="PF04560">
    <property type="entry name" value="RNA_pol_Rpb2_7"/>
    <property type="match status" value="1"/>
</dbReference>
<dbReference type="SUPFAM" id="SSF64484">
    <property type="entry name" value="beta and beta-prime subunits of DNA dependent RNA-polymerase"/>
    <property type="match status" value="1"/>
</dbReference>
<dbReference type="PROSITE" id="PS01166">
    <property type="entry name" value="RNA_POL_BETA"/>
    <property type="match status" value="1"/>
</dbReference>
<name>RPOB_MYCPN</name>
<comment type="function">
    <text evidence="1">DNA-dependent RNA polymerase catalyzes the transcription of DNA into RNA using the four ribonucleoside triphosphates as substrates.</text>
</comment>
<comment type="catalytic activity">
    <reaction evidence="1">
        <text>RNA(n) + a ribonucleoside 5'-triphosphate = RNA(n+1) + diphosphate</text>
        <dbReference type="Rhea" id="RHEA:21248"/>
        <dbReference type="Rhea" id="RHEA-COMP:14527"/>
        <dbReference type="Rhea" id="RHEA-COMP:17342"/>
        <dbReference type="ChEBI" id="CHEBI:33019"/>
        <dbReference type="ChEBI" id="CHEBI:61557"/>
        <dbReference type="ChEBI" id="CHEBI:140395"/>
        <dbReference type="EC" id="2.7.7.6"/>
    </reaction>
</comment>
<comment type="subunit">
    <text evidence="1">The RNAP catalytic core consists of 2 alpha, 1 beta, 1 beta' and 1 omega subunit. When a sigma factor is associated with the core the holoenzyme is formed, which can initiate transcription.</text>
</comment>
<comment type="similarity">
    <text evidence="1">Belongs to the RNA polymerase beta chain family.</text>
</comment>